<dbReference type="EC" id="4.1.1.23" evidence="1"/>
<dbReference type="EMBL" id="AL954747">
    <property type="protein sequence ID" value="CAD85870.1"/>
    <property type="molecule type" value="Genomic_DNA"/>
</dbReference>
<dbReference type="RefSeq" id="WP_011112491.1">
    <property type="nucleotide sequence ID" value="NC_004757.1"/>
</dbReference>
<dbReference type="SMR" id="Q82TD8"/>
<dbReference type="STRING" id="228410.NE1959"/>
<dbReference type="GeneID" id="87105113"/>
<dbReference type="KEGG" id="neu:NE1959"/>
<dbReference type="eggNOG" id="COG0284">
    <property type="taxonomic scope" value="Bacteria"/>
</dbReference>
<dbReference type="HOGENOM" id="CLU_067069_0_0_4"/>
<dbReference type="OrthoDB" id="9806203at2"/>
<dbReference type="PhylomeDB" id="Q82TD8"/>
<dbReference type="UniPathway" id="UPA00070">
    <property type="reaction ID" value="UER00120"/>
</dbReference>
<dbReference type="Proteomes" id="UP000001416">
    <property type="component" value="Chromosome"/>
</dbReference>
<dbReference type="GO" id="GO:0005829">
    <property type="term" value="C:cytosol"/>
    <property type="evidence" value="ECO:0007669"/>
    <property type="project" value="TreeGrafter"/>
</dbReference>
<dbReference type="GO" id="GO:0004590">
    <property type="term" value="F:orotidine-5'-phosphate decarboxylase activity"/>
    <property type="evidence" value="ECO:0007669"/>
    <property type="project" value="UniProtKB-UniRule"/>
</dbReference>
<dbReference type="GO" id="GO:0006207">
    <property type="term" value="P:'de novo' pyrimidine nucleobase biosynthetic process"/>
    <property type="evidence" value="ECO:0007669"/>
    <property type="project" value="InterPro"/>
</dbReference>
<dbReference type="GO" id="GO:0044205">
    <property type="term" value="P:'de novo' UMP biosynthetic process"/>
    <property type="evidence" value="ECO:0007669"/>
    <property type="project" value="UniProtKB-UniRule"/>
</dbReference>
<dbReference type="CDD" id="cd04725">
    <property type="entry name" value="OMP_decarboxylase_like"/>
    <property type="match status" value="1"/>
</dbReference>
<dbReference type="FunFam" id="3.20.20.70:FF:000015">
    <property type="entry name" value="Orotidine 5'-phosphate decarboxylase"/>
    <property type="match status" value="1"/>
</dbReference>
<dbReference type="Gene3D" id="3.20.20.70">
    <property type="entry name" value="Aldolase class I"/>
    <property type="match status" value="1"/>
</dbReference>
<dbReference type="HAMAP" id="MF_01200_B">
    <property type="entry name" value="OMPdecase_type1_B"/>
    <property type="match status" value="1"/>
</dbReference>
<dbReference type="InterPro" id="IPR013785">
    <property type="entry name" value="Aldolase_TIM"/>
</dbReference>
<dbReference type="InterPro" id="IPR014732">
    <property type="entry name" value="OMPdecase"/>
</dbReference>
<dbReference type="InterPro" id="IPR018089">
    <property type="entry name" value="OMPdecase_AS"/>
</dbReference>
<dbReference type="InterPro" id="IPR047596">
    <property type="entry name" value="OMPdecase_bac"/>
</dbReference>
<dbReference type="InterPro" id="IPR001754">
    <property type="entry name" value="OMPdeCOase_dom"/>
</dbReference>
<dbReference type="InterPro" id="IPR011060">
    <property type="entry name" value="RibuloseP-bd_barrel"/>
</dbReference>
<dbReference type="NCBIfam" id="NF001273">
    <property type="entry name" value="PRK00230.1"/>
    <property type="match status" value="1"/>
</dbReference>
<dbReference type="NCBIfam" id="TIGR01740">
    <property type="entry name" value="pyrF"/>
    <property type="match status" value="1"/>
</dbReference>
<dbReference type="PANTHER" id="PTHR32119">
    <property type="entry name" value="OROTIDINE 5'-PHOSPHATE DECARBOXYLASE"/>
    <property type="match status" value="1"/>
</dbReference>
<dbReference type="PANTHER" id="PTHR32119:SF2">
    <property type="entry name" value="OROTIDINE 5'-PHOSPHATE DECARBOXYLASE"/>
    <property type="match status" value="1"/>
</dbReference>
<dbReference type="Pfam" id="PF00215">
    <property type="entry name" value="OMPdecase"/>
    <property type="match status" value="1"/>
</dbReference>
<dbReference type="SMART" id="SM00934">
    <property type="entry name" value="OMPdecase"/>
    <property type="match status" value="1"/>
</dbReference>
<dbReference type="SUPFAM" id="SSF51366">
    <property type="entry name" value="Ribulose-phoshate binding barrel"/>
    <property type="match status" value="1"/>
</dbReference>
<dbReference type="PROSITE" id="PS00156">
    <property type="entry name" value="OMPDECASE"/>
    <property type="match status" value="1"/>
</dbReference>
<keyword id="KW-0210">Decarboxylase</keyword>
<keyword id="KW-0456">Lyase</keyword>
<keyword id="KW-0665">Pyrimidine biosynthesis</keyword>
<keyword id="KW-1185">Reference proteome</keyword>
<proteinExistence type="inferred from homology"/>
<name>PYRF_NITEU</name>
<accession>Q82TD8</accession>
<reference key="1">
    <citation type="journal article" date="2003" name="J. Bacteriol.">
        <title>Complete genome sequence of the ammonia-oxidizing bacterium and obligate chemolithoautotroph Nitrosomonas europaea.</title>
        <authorList>
            <person name="Chain P."/>
            <person name="Lamerdin J.E."/>
            <person name="Larimer F.W."/>
            <person name="Regala W."/>
            <person name="Lao V."/>
            <person name="Land M.L."/>
            <person name="Hauser L."/>
            <person name="Hooper A.B."/>
            <person name="Klotz M.G."/>
            <person name="Norton J."/>
            <person name="Sayavedra-Soto L.A."/>
            <person name="Arciero D.M."/>
            <person name="Hommes N.G."/>
            <person name="Whittaker M.M."/>
            <person name="Arp D.J."/>
        </authorList>
    </citation>
    <scope>NUCLEOTIDE SEQUENCE [LARGE SCALE GENOMIC DNA]</scope>
    <source>
        <strain>ATCC 19718 / CIP 103999 / KCTC 2705 / NBRC 14298</strain>
    </source>
</reference>
<sequence>MNDPRIIVALDFPDQCTALNFAAGLDSTLCRVKVGKELFTLAGPQLVEKLMKLGFDVFLDLKFHDIPNTVAAACSAASSLGVWMVNVHALGGSKMLLAARQALDGKRTRLIAVTLLTSLNQNDLSELGIADTPETMVQRLALLAQRCGLDGVVCSALEAVSLREVTGEDFCLVTPGIRSFGDGNDDQARIATPAMAIRSGASYLVIGRPITRSPDPLGALRRFNDEVASVL</sequence>
<protein>
    <recommendedName>
        <fullName evidence="1">Orotidine 5'-phosphate decarboxylase</fullName>
        <ecNumber evidence="1">4.1.1.23</ecNumber>
    </recommendedName>
    <alternativeName>
        <fullName evidence="1">OMP decarboxylase</fullName>
        <shortName evidence="1">OMPDCase</shortName>
        <shortName evidence="1">OMPdecase</shortName>
    </alternativeName>
</protein>
<evidence type="ECO:0000255" key="1">
    <source>
        <dbReference type="HAMAP-Rule" id="MF_01200"/>
    </source>
</evidence>
<feature type="chain" id="PRO_0000134558" description="Orotidine 5'-phosphate decarboxylase">
    <location>
        <begin position="1"/>
        <end position="231"/>
    </location>
</feature>
<feature type="active site" description="Proton donor" evidence="1">
    <location>
        <position position="62"/>
    </location>
</feature>
<feature type="binding site" evidence="1">
    <location>
        <position position="11"/>
    </location>
    <ligand>
        <name>substrate</name>
    </ligand>
</feature>
<feature type="binding site" evidence="1">
    <location>
        <position position="33"/>
    </location>
    <ligand>
        <name>substrate</name>
    </ligand>
</feature>
<feature type="binding site" evidence="1">
    <location>
        <begin position="60"/>
        <end position="69"/>
    </location>
    <ligand>
        <name>substrate</name>
    </ligand>
</feature>
<feature type="binding site" evidence="1">
    <location>
        <position position="117"/>
    </location>
    <ligand>
        <name>substrate</name>
    </ligand>
</feature>
<feature type="binding site" evidence="1">
    <location>
        <position position="178"/>
    </location>
    <ligand>
        <name>substrate</name>
    </ligand>
</feature>
<feature type="binding site" evidence="1">
    <location>
        <position position="187"/>
    </location>
    <ligand>
        <name>substrate</name>
    </ligand>
</feature>
<feature type="binding site" evidence="1">
    <location>
        <position position="207"/>
    </location>
    <ligand>
        <name>substrate</name>
    </ligand>
</feature>
<feature type="binding site" evidence="1">
    <location>
        <position position="208"/>
    </location>
    <ligand>
        <name>substrate</name>
    </ligand>
</feature>
<organism>
    <name type="scientific">Nitrosomonas europaea (strain ATCC 19718 / CIP 103999 / KCTC 2705 / NBRC 14298)</name>
    <dbReference type="NCBI Taxonomy" id="228410"/>
    <lineage>
        <taxon>Bacteria</taxon>
        <taxon>Pseudomonadati</taxon>
        <taxon>Pseudomonadota</taxon>
        <taxon>Betaproteobacteria</taxon>
        <taxon>Nitrosomonadales</taxon>
        <taxon>Nitrosomonadaceae</taxon>
        <taxon>Nitrosomonas</taxon>
    </lineage>
</organism>
<gene>
    <name evidence="1" type="primary">pyrF</name>
    <name type="ordered locus">NE1959</name>
</gene>
<comment type="function">
    <text evidence="1">Catalyzes the decarboxylation of orotidine 5'-monophosphate (OMP) to uridine 5'-monophosphate (UMP).</text>
</comment>
<comment type="catalytic activity">
    <reaction evidence="1">
        <text>orotidine 5'-phosphate + H(+) = UMP + CO2</text>
        <dbReference type="Rhea" id="RHEA:11596"/>
        <dbReference type="ChEBI" id="CHEBI:15378"/>
        <dbReference type="ChEBI" id="CHEBI:16526"/>
        <dbReference type="ChEBI" id="CHEBI:57538"/>
        <dbReference type="ChEBI" id="CHEBI:57865"/>
        <dbReference type="EC" id="4.1.1.23"/>
    </reaction>
</comment>
<comment type="pathway">
    <text evidence="1">Pyrimidine metabolism; UMP biosynthesis via de novo pathway; UMP from orotate: step 2/2.</text>
</comment>
<comment type="subunit">
    <text evidence="1">Homodimer.</text>
</comment>
<comment type="similarity">
    <text evidence="1">Belongs to the OMP decarboxylase family. Type 1 subfamily.</text>
</comment>